<feature type="chain" id="PRO_0000253583" description="Metallothionein-3">
    <location>
        <begin position="1"/>
        <end position="65"/>
    </location>
</feature>
<feature type="region of interest" description="Beta">
    <location>
        <begin position="1"/>
        <end position="30"/>
    </location>
</feature>
<feature type="region of interest" description="Alpha">
    <location>
        <begin position="31"/>
        <end position="65"/>
    </location>
</feature>
<feature type="binding site" evidence="2">
    <location>
        <position position="6"/>
    </location>
    <ligand>
        <name>a divalent metal cation</name>
        <dbReference type="ChEBI" id="CHEBI:60240"/>
        <label>1</label>
        <note>in cluster B</note>
    </ligand>
</feature>
<feature type="binding site" evidence="2">
    <location>
        <position position="8"/>
    </location>
    <ligand>
        <name>a divalent metal cation</name>
        <dbReference type="ChEBI" id="CHEBI:60240"/>
        <label>1</label>
        <note>in cluster B</note>
    </ligand>
</feature>
<feature type="binding site" evidence="2">
    <location>
        <position position="8"/>
    </location>
    <ligand>
        <name>a divalent metal cation</name>
        <dbReference type="ChEBI" id="CHEBI:60240"/>
        <label>2</label>
        <note>in cluster B</note>
    </ligand>
</feature>
<feature type="binding site" evidence="2">
    <location>
        <position position="14"/>
    </location>
    <ligand>
        <name>a divalent metal cation</name>
        <dbReference type="ChEBI" id="CHEBI:60240"/>
        <label>2</label>
        <note>in cluster B</note>
    </ligand>
</feature>
<feature type="binding site" evidence="2">
    <location>
        <position position="16"/>
    </location>
    <ligand>
        <name>a divalent metal cation</name>
        <dbReference type="ChEBI" id="CHEBI:60240"/>
        <label>2</label>
        <note>in cluster B</note>
    </ligand>
</feature>
<feature type="binding site" evidence="2">
    <location>
        <position position="16"/>
    </location>
    <ligand>
        <name>a divalent metal cation</name>
        <dbReference type="ChEBI" id="CHEBI:60240"/>
        <label>3</label>
        <note>in cluster B</note>
    </ligand>
</feature>
<feature type="binding site" evidence="2">
    <location>
        <position position="20"/>
    </location>
    <ligand>
        <name>a divalent metal cation</name>
        <dbReference type="ChEBI" id="CHEBI:60240"/>
        <label>3</label>
        <note>in cluster B</note>
    </ligand>
</feature>
<feature type="binding site" evidence="2">
    <location>
        <position position="22"/>
    </location>
    <ligand>
        <name>a divalent metal cation</name>
        <dbReference type="ChEBI" id="CHEBI:60240"/>
        <label>1</label>
        <note>in cluster B</note>
    </ligand>
</feature>
<feature type="binding site" evidence="2">
    <location>
        <position position="25"/>
    </location>
    <ligand>
        <name>a divalent metal cation</name>
        <dbReference type="ChEBI" id="CHEBI:60240"/>
        <label>1</label>
        <note>in cluster B</note>
    </ligand>
</feature>
<feature type="binding site" evidence="2">
    <location>
        <position position="25"/>
    </location>
    <ligand>
        <name>a divalent metal cation</name>
        <dbReference type="ChEBI" id="CHEBI:60240"/>
        <label>3</label>
        <note>in cluster B</note>
    </ligand>
</feature>
<feature type="binding site" evidence="2">
    <location>
        <position position="27"/>
    </location>
    <ligand>
        <name>a divalent metal cation</name>
        <dbReference type="ChEBI" id="CHEBI:60240"/>
        <label>2</label>
        <note>in cluster B</note>
    </ligand>
</feature>
<feature type="binding site" evidence="2">
    <location>
        <position position="34"/>
    </location>
    <ligand>
        <name>a divalent metal cation</name>
        <dbReference type="ChEBI" id="CHEBI:60240"/>
        <label>5</label>
        <note>in cluster A</note>
    </ligand>
</feature>
<feature type="binding site" evidence="2">
    <location>
        <position position="35"/>
    </location>
    <ligand>
        <name>a divalent metal cation</name>
        <dbReference type="ChEBI" id="CHEBI:60240"/>
        <label>5</label>
        <note>in cluster A</note>
    </ligand>
</feature>
<feature type="binding site" evidence="2">
    <location>
        <position position="35"/>
    </location>
    <ligand>
        <name>a divalent metal cation</name>
        <dbReference type="ChEBI" id="CHEBI:60240"/>
        <label>6</label>
        <note>in cluster A</note>
    </ligand>
</feature>
<feature type="binding site" evidence="2">
    <location>
        <position position="39"/>
    </location>
    <ligand>
        <name>a divalent metal cation</name>
        <dbReference type="ChEBI" id="CHEBI:60240"/>
        <label>6</label>
        <note>in cluster A</note>
    </ligand>
</feature>
<feature type="binding site" evidence="2">
    <location>
        <position position="42"/>
    </location>
    <ligand>
        <name>a divalent metal cation</name>
        <dbReference type="ChEBI" id="CHEBI:60240"/>
        <label>4</label>
        <note>in cluster A</note>
    </ligand>
</feature>
<feature type="binding site" evidence="2">
    <location>
        <position position="42"/>
    </location>
    <ligand>
        <name>a divalent metal cation</name>
        <dbReference type="ChEBI" id="CHEBI:60240"/>
        <label>6</label>
        <note>in cluster A</note>
    </ligand>
</feature>
<feature type="binding site" evidence="2">
    <location>
        <position position="46"/>
    </location>
    <ligand>
        <name>a divalent metal cation</name>
        <dbReference type="ChEBI" id="CHEBI:60240"/>
        <label>4</label>
        <note>in cluster A</note>
    </ligand>
</feature>
<feature type="binding site" evidence="2">
    <location>
        <position position="48"/>
    </location>
    <ligand>
        <name>a divalent metal cation</name>
        <dbReference type="ChEBI" id="CHEBI:60240"/>
        <label>5</label>
        <note>in cluster A</note>
    </ligand>
</feature>
<feature type="binding site" evidence="2">
    <location>
        <position position="48"/>
    </location>
    <ligand>
        <name>a divalent metal cation</name>
        <dbReference type="ChEBI" id="CHEBI:60240"/>
        <label>7</label>
        <note>in cluster A</note>
    </ligand>
</feature>
<feature type="binding site" evidence="2">
    <location>
        <position position="61"/>
    </location>
    <ligand>
        <name>a divalent metal cation</name>
        <dbReference type="ChEBI" id="CHEBI:60240"/>
        <label>7</label>
        <note>in cluster A</note>
    </ligand>
</feature>
<feature type="binding site" evidence="2">
    <location>
        <position position="63"/>
    </location>
    <ligand>
        <name>a divalent metal cation</name>
        <dbReference type="ChEBI" id="CHEBI:60240"/>
        <label>7</label>
        <note>in cluster A</note>
    </ligand>
</feature>
<feature type="binding site" evidence="2">
    <location>
        <position position="64"/>
    </location>
    <ligand>
        <name>a divalent metal cation</name>
        <dbReference type="ChEBI" id="CHEBI:60240"/>
        <label>6</label>
        <note>in cluster A</note>
    </ligand>
</feature>
<feature type="binding site" evidence="2">
    <location>
        <position position="64"/>
    </location>
    <ligand>
        <name>a divalent metal cation</name>
        <dbReference type="ChEBI" id="CHEBI:60240"/>
        <label>7</label>
        <note>in cluster A</note>
    </ligand>
</feature>
<feature type="modified residue" description="N-acetylmethionine" evidence="4">
    <location>
        <position position="1"/>
    </location>
</feature>
<feature type="modified residue" description="Phosphoserine" evidence="3">
    <location>
        <position position="33"/>
    </location>
</feature>
<accession>Q8MKE4</accession>
<comment type="function">
    <text evidence="1">Binds heavy metals. Contains five zinc and one copper atoms per polypeptide chain and only a negligible amount of cadmium (By similarity).</text>
</comment>
<comment type="similarity">
    <text evidence="5">Belongs to the metallothionein superfamily. Type 1 family.</text>
</comment>
<keyword id="KW-0007">Acetylation</keyword>
<keyword id="KW-0186">Copper</keyword>
<keyword id="KW-0479">Metal-binding</keyword>
<keyword id="KW-0480">Metal-thiolate cluster</keyword>
<keyword id="KW-0597">Phosphoprotein</keyword>
<keyword id="KW-1185">Reference proteome</keyword>
<keyword id="KW-0862">Zinc</keyword>
<dbReference type="EMBL" id="AF500199">
    <property type="protein sequence ID" value="AAM21134.1"/>
    <property type="molecule type" value="mRNA"/>
</dbReference>
<dbReference type="RefSeq" id="NP_001009755.1">
    <property type="nucleotide sequence ID" value="NM_001009755.1"/>
</dbReference>
<dbReference type="STRING" id="9940.ENSOARP00000019709"/>
<dbReference type="PaxDb" id="9940-ENSOARP00000019709"/>
<dbReference type="Ensembl" id="ENSOART00025011882">
    <property type="protein sequence ID" value="ENSOARP00025005982"/>
    <property type="gene ID" value="ENSOARG00025007188"/>
</dbReference>
<dbReference type="Ensembl" id="ENSOART00040040694">
    <property type="protein sequence ID" value="ENSOARP00040021105"/>
    <property type="gene ID" value="ENSOARG00040024416"/>
</dbReference>
<dbReference type="Ensembl" id="ENSOART00180006207">
    <property type="protein sequence ID" value="ENSOARP00180003054"/>
    <property type="gene ID" value="ENSOARG00180003865"/>
</dbReference>
<dbReference type="Ensembl" id="ENSOART00185041635">
    <property type="protein sequence ID" value="ENSOARP00185020609"/>
    <property type="gene ID" value="ENSOARG00185025294"/>
</dbReference>
<dbReference type="Ensembl" id="ENSOART00215049981">
    <property type="protein sequence ID" value="ENSOARP00215025896"/>
    <property type="gene ID" value="ENSOARG00215029918"/>
</dbReference>
<dbReference type="Ensembl" id="ENSOART00220025121">
    <property type="protein sequence ID" value="ENSOARP00220013833"/>
    <property type="gene ID" value="ENSOARG00220015111"/>
</dbReference>
<dbReference type="Ensembl" id="ENSOART00225008161">
    <property type="protein sequence ID" value="ENSOARP00225003893"/>
    <property type="gene ID" value="ENSOARG00225004982"/>
</dbReference>
<dbReference type="GeneID" id="443168"/>
<dbReference type="KEGG" id="oas:443168"/>
<dbReference type="CTD" id="4504"/>
<dbReference type="eggNOG" id="KOG4738">
    <property type="taxonomic scope" value="Eukaryota"/>
</dbReference>
<dbReference type="OrthoDB" id="9539597at2759"/>
<dbReference type="Proteomes" id="UP000002356">
    <property type="component" value="Unplaced"/>
</dbReference>
<dbReference type="GO" id="GO:0016234">
    <property type="term" value="C:inclusion body"/>
    <property type="evidence" value="ECO:0000250"/>
    <property type="project" value="UniProtKB"/>
</dbReference>
<dbReference type="GO" id="GO:0005634">
    <property type="term" value="C:nucleus"/>
    <property type="evidence" value="ECO:0000250"/>
    <property type="project" value="UniProtKB"/>
</dbReference>
<dbReference type="GO" id="GO:0048471">
    <property type="term" value="C:perinuclear region of cytoplasm"/>
    <property type="evidence" value="ECO:0000250"/>
    <property type="project" value="UniProtKB"/>
</dbReference>
<dbReference type="GO" id="GO:0008021">
    <property type="term" value="C:synaptic vesicle"/>
    <property type="evidence" value="ECO:0000250"/>
    <property type="project" value="UniProtKB"/>
</dbReference>
<dbReference type="GO" id="GO:0046870">
    <property type="term" value="F:cadmium ion binding"/>
    <property type="evidence" value="ECO:0000250"/>
    <property type="project" value="UniProtKB"/>
</dbReference>
<dbReference type="GO" id="GO:0005507">
    <property type="term" value="F:copper ion binding"/>
    <property type="evidence" value="ECO:0000250"/>
    <property type="project" value="UniProtKB"/>
</dbReference>
<dbReference type="GO" id="GO:0140487">
    <property type="term" value="F:metal ion sequestering activity"/>
    <property type="evidence" value="ECO:0000250"/>
    <property type="project" value="UniProtKB"/>
</dbReference>
<dbReference type="GO" id="GO:0030295">
    <property type="term" value="F:protein kinase activator activity"/>
    <property type="evidence" value="ECO:0000250"/>
    <property type="project" value="UniProtKB"/>
</dbReference>
<dbReference type="GO" id="GO:0008270">
    <property type="term" value="F:zinc ion binding"/>
    <property type="evidence" value="ECO:0000250"/>
    <property type="project" value="UniProtKB"/>
</dbReference>
<dbReference type="GO" id="GO:0032148">
    <property type="term" value="P:activation of protein kinase B activity"/>
    <property type="evidence" value="ECO:0000250"/>
    <property type="project" value="UniProtKB"/>
</dbReference>
<dbReference type="GO" id="GO:1990748">
    <property type="term" value="P:cellular detoxification"/>
    <property type="evidence" value="ECO:0000250"/>
    <property type="project" value="UniProtKB"/>
</dbReference>
<dbReference type="GO" id="GO:0071276">
    <property type="term" value="P:cellular response to cadmium ion"/>
    <property type="evidence" value="ECO:0007669"/>
    <property type="project" value="TreeGrafter"/>
</dbReference>
<dbReference type="GO" id="GO:0071280">
    <property type="term" value="P:cellular response to copper ion"/>
    <property type="evidence" value="ECO:0007669"/>
    <property type="project" value="TreeGrafter"/>
</dbReference>
<dbReference type="GO" id="GO:0071456">
    <property type="term" value="P:cellular response to hypoxia"/>
    <property type="evidence" value="ECO:0007669"/>
    <property type="project" value="Ensembl"/>
</dbReference>
<dbReference type="GO" id="GO:0034614">
    <property type="term" value="P:cellular response to reactive oxygen species"/>
    <property type="evidence" value="ECO:0000250"/>
    <property type="project" value="UniProtKB"/>
</dbReference>
<dbReference type="GO" id="GO:0071294">
    <property type="term" value="P:cellular response to zinc ion"/>
    <property type="evidence" value="ECO:0007669"/>
    <property type="project" value="TreeGrafter"/>
</dbReference>
<dbReference type="GO" id="GO:0071585">
    <property type="term" value="P:detoxification of cadmium ion"/>
    <property type="evidence" value="ECO:0007669"/>
    <property type="project" value="Ensembl"/>
</dbReference>
<dbReference type="GO" id="GO:0010273">
    <property type="term" value="P:detoxification of copper ion"/>
    <property type="evidence" value="ECO:0007669"/>
    <property type="project" value="TreeGrafter"/>
</dbReference>
<dbReference type="GO" id="GO:0006112">
    <property type="term" value="P:energy reserve metabolic process"/>
    <property type="evidence" value="ECO:0000250"/>
    <property type="project" value="UniProtKB"/>
</dbReference>
<dbReference type="GO" id="GO:0006882">
    <property type="term" value="P:intracellular zinc ion homeostasis"/>
    <property type="evidence" value="ECO:0000250"/>
    <property type="project" value="UniProtKB"/>
</dbReference>
<dbReference type="GO" id="GO:0033210">
    <property type="term" value="P:leptin-mediated signaling pathway"/>
    <property type="evidence" value="ECO:0000250"/>
    <property type="project" value="UniProtKB"/>
</dbReference>
<dbReference type="GO" id="GO:0030517">
    <property type="term" value="P:negative regulation of axon extension"/>
    <property type="evidence" value="ECO:0000250"/>
    <property type="project" value="UniProtKB"/>
</dbReference>
<dbReference type="GO" id="GO:0030308">
    <property type="term" value="P:negative regulation of cell growth"/>
    <property type="evidence" value="ECO:0000250"/>
    <property type="project" value="UniProtKB"/>
</dbReference>
<dbReference type="GO" id="GO:0043524">
    <property type="term" value="P:negative regulation of neuron apoptotic process"/>
    <property type="evidence" value="ECO:0000250"/>
    <property type="project" value="UniProtKB"/>
</dbReference>
<dbReference type="GO" id="GO:0051354">
    <property type="term" value="P:negative regulation of oxidoreductase activity"/>
    <property type="evidence" value="ECO:0000250"/>
    <property type="project" value="UniProtKB"/>
</dbReference>
<dbReference type="GO" id="GO:0045893">
    <property type="term" value="P:positive regulation of DNA-templated transcription"/>
    <property type="evidence" value="ECO:0000250"/>
    <property type="project" value="UniProtKB"/>
</dbReference>
<dbReference type="GO" id="GO:0070374">
    <property type="term" value="P:positive regulation of ERK1 and ERK2 cascade"/>
    <property type="evidence" value="ECO:0000250"/>
    <property type="project" value="UniProtKB"/>
</dbReference>
<dbReference type="GO" id="GO:0010628">
    <property type="term" value="P:positive regulation of gene expression"/>
    <property type="evidence" value="ECO:0000250"/>
    <property type="project" value="UniProtKB"/>
</dbReference>
<dbReference type="GO" id="GO:2000376">
    <property type="term" value="P:positive regulation of oxygen metabolic process"/>
    <property type="evidence" value="ECO:0000250"/>
    <property type="project" value="UniProtKB"/>
</dbReference>
<dbReference type="GO" id="GO:0001934">
    <property type="term" value="P:positive regulation of protein phosphorylation"/>
    <property type="evidence" value="ECO:0000250"/>
    <property type="project" value="UniProtKB"/>
</dbReference>
<dbReference type="GO" id="GO:0030949">
    <property type="term" value="P:positive regulation of vascular endothelial growth factor receptor signaling pathway"/>
    <property type="evidence" value="ECO:0000250"/>
    <property type="project" value="UniProtKB"/>
</dbReference>
<dbReference type="GO" id="GO:0050821">
    <property type="term" value="P:protein stabilization"/>
    <property type="evidence" value="ECO:0000250"/>
    <property type="project" value="UniProtKB"/>
</dbReference>
<dbReference type="GO" id="GO:0032095">
    <property type="term" value="P:regulation of response to food"/>
    <property type="evidence" value="ECO:0000250"/>
    <property type="project" value="UniProtKB"/>
</dbReference>
<dbReference type="GO" id="GO:0019430">
    <property type="term" value="P:removal of superoxide radicals"/>
    <property type="evidence" value="ECO:0000250"/>
    <property type="project" value="UniProtKB"/>
</dbReference>
<dbReference type="GO" id="GO:0001666">
    <property type="term" value="P:response to hypoxia"/>
    <property type="evidence" value="ECO:0000250"/>
    <property type="project" value="UniProtKB"/>
</dbReference>
<dbReference type="GO" id="GO:0006829">
    <property type="term" value="P:zinc ion transport"/>
    <property type="evidence" value="ECO:0000250"/>
    <property type="project" value="UniProtKB"/>
</dbReference>
<dbReference type="FunFam" id="4.10.10.10:FF:000001">
    <property type="entry name" value="Metallothionein"/>
    <property type="match status" value="1"/>
</dbReference>
<dbReference type="Gene3D" id="4.10.10.10">
    <property type="entry name" value="Metallothionein Isoform II"/>
    <property type="match status" value="1"/>
</dbReference>
<dbReference type="InterPro" id="IPR017854">
    <property type="entry name" value="Metalthion_dom_sf"/>
</dbReference>
<dbReference type="InterPro" id="IPR023587">
    <property type="entry name" value="Metalthion_dom_sf_vert"/>
</dbReference>
<dbReference type="InterPro" id="IPR000006">
    <property type="entry name" value="Metalthion_vert"/>
</dbReference>
<dbReference type="PANTHER" id="PTHR23299">
    <property type="entry name" value="METALLOTHIONEIN"/>
    <property type="match status" value="1"/>
</dbReference>
<dbReference type="PANTHER" id="PTHR23299:SF18">
    <property type="entry name" value="METALLOTHIONEIN-3"/>
    <property type="match status" value="1"/>
</dbReference>
<dbReference type="Pfam" id="PF00131">
    <property type="entry name" value="Metallothio"/>
    <property type="match status" value="1"/>
</dbReference>
<dbReference type="SUPFAM" id="SSF57868">
    <property type="entry name" value="Metallothionein"/>
    <property type="match status" value="1"/>
</dbReference>
<evidence type="ECO:0000250" key="1"/>
<evidence type="ECO:0000250" key="2">
    <source>
        <dbReference type="UniProtKB" id="P02795"/>
    </source>
</evidence>
<evidence type="ECO:0000250" key="3">
    <source>
        <dbReference type="UniProtKB" id="P28184"/>
    </source>
</evidence>
<evidence type="ECO:0000250" key="4">
    <source>
        <dbReference type="UniProtKB" id="P37359"/>
    </source>
</evidence>
<evidence type="ECO:0000305" key="5"/>
<sequence length="65" mass="6574">MDPEACPCPTGGSCTCSDSCKCEGCTCASSKKSCCPAECEKCAKDCVCKGGEGAEAEEKKCGCCQ</sequence>
<protein>
    <recommendedName>
        <fullName>Metallothionein-3</fullName>
        <shortName>MT-3</shortName>
    </recommendedName>
    <alternativeName>
        <fullName>Metallothionein-III</fullName>
        <shortName>MT-III</shortName>
    </alternativeName>
</protein>
<organism>
    <name type="scientific">Ovis aries</name>
    <name type="common">Sheep</name>
    <dbReference type="NCBI Taxonomy" id="9940"/>
    <lineage>
        <taxon>Eukaryota</taxon>
        <taxon>Metazoa</taxon>
        <taxon>Chordata</taxon>
        <taxon>Craniata</taxon>
        <taxon>Vertebrata</taxon>
        <taxon>Euteleostomi</taxon>
        <taxon>Mammalia</taxon>
        <taxon>Eutheria</taxon>
        <taxon>Laurasiatheria</taxon>
        <taxon>Artiodactyla</taxon>
        <taxon>Ruminantia</taxon>
        <taxon>Pecora</taxon>
        <taxon>Bovidae</taxon>
        <taxon>Caprinae</taxon>
        <taxon>Ovis</taxon>
    </lineage>
</organism>
<gene>
    <name type="primary">MT3</name>
</gene>
<name>MT3_SHEEP</name>
<reference key="1">
    <citation type="journal article" date="2002" name="Biochem. J.">
        <title>Sheep have an unusual variant of the brain-specific metallothionein, metallothionein-III.</title>
        <authorList>
            <person name="Chung R.S."/>
            <person name="Holloway A.F."/>
            <person name="Eckhardt B.L."/>
            <person name="Harris J.A."/>
            <person name="Vickers J.C."/>
            <person name="Chuah M.I."/>
            <person name="West A.K."/>
        </authorList>
    </citation>
    <scope>NUCLEOTIDE SEQUENCE [MRNA]</scope>
    <source>
        <tissue>Brain</tissue>
    </source>
</reference>
<proteinExistence type="inferred from homology"/>